<keyword id="KW-0010">Activator</keyword>
<keyword id="KW-0238">DNA-binding</keyword>
<keyword id="KW-0244">Early protein</keyword>
<keyword id="KW-1048">Host nucleus</keyword>
<keyword id="KW-0597">Phosphoprotein</keyword>
<keyword id="KW-1185">Reference proteome</keyword>
<keyword id="KW-0804">Transcription</keyword>
<keyword id="KW-0805">Transcription regulation</keyword>
<dbReference type="EMBL" id="AY372243">
    <property type="protein sequence ID" value="AAQ73747.1"/>
    <property type="molecule type" value="Genomic_DNA"/>
</dbReference>
<dbReference type="EMBL" id="AY372243">
    <property type="protein sequence ID" value="AAQ73758.1"/>
    <property type="molecule type" value="Genomic_DNA"/>
</dbReference>
<dbReference type="RefSeq" id="NP_944441.1">
    <property type="nucleotide sequence ID" value="NC_005264.1"/>
</dbReference>
<dbReference type="RefSeq" id="NP_944452.1">
    <property type="nucleotide sequence ID" value="NC_005264.1"/>
</dbReference>
<dbReference type="SMR" id="Q6UDF2"/>
<dbReference type="GeneID" id="2656991"/>
<dbReference type="GeneID" id="2657000"/>
<dbReference type="KEGG" id="vg:2656991"/>
<dbReference type="KEGG" id="vg:2657000"/>
<dbReference type="Proteomes" id="UP000006840">
    <property type="component" value="Segment"/>
</dbReference>
<dbReference type="GO" id="GO:0042025">
    <property type="term" value="C:host cell nucleus"/>
    <property type="evidence" value="ECO:0007669"/>
    <property type="project" value="UniProtKB-SubCell"/>
</dbReference>
<dbReference type="GO" id="GO:0003677">
    <property type="term" value="F:DNA binding"/>
    <property type="evidence" value="ECO:0007669"/>
    <property type="project" value="UniProtKB-KW"/>
</dbReference>
<dbReference type="GO" id="GO:0039695">
    <property type="term" value="P:DNA-templated viral transcription"/>
    <property type="evidence" value="ECO:0000250"/>
    <property type="project" value="UniProtKB"/>
</dbReference>
<dbReference type="GO" id="GO:0045893">
    <property type="term" value="P:positive regulation of DNA-templated transcription"/>
    <property type="evidence" value="ECO:0007669"/>
    <property type="project" value="InterPro"/>
</dbReference>
<dbReference type="InterPro" id="IPR005206">
    <property type="entry name" value="Herpes_ICP4_N"/>
</dbReference>
<dbReference type="Pfam" id="PF03584">
    <property type="entry name" value="Herpes_ICP4_N"/>
    <property type="match status" value="1"/>
</dbReference>
<name>ICP4_PSHV1</name>
<protein>
    <recommendedName>
        <fullName>Major viral transcription factor ICP4 homolog</fullName>
    </recommendedName>
</protein>
<organismHost>
    <name type="scientific">Amazona oratrix</name>
    <name type="common">yellow-headed parrot</name>
    <dbReference type="NCBI Taxonomy" id="152276"/>
</organismHost>
<accession>Q6UDF2</accession>
<feature type="chain" id="PRO_0000406800" description="Major viral transcription factor ICP4 homolog">
    <location>
        <begin position="1"/>
        <end position="2033"/>
    </location>
</feature>
<feature type="region of interest" description="Disordered" evidence="2">
    <location>
        <begin position="1"/>
        <end position="47"/>
    </location>
</feature>
<feature type="region of interest" description="Disordered" evidence="2">
    <location>
        <begin position="95"/>
        <end position="145"/>
    </location>
</feature>
<feature type="region of interest" description="Disordered" evidence="2">
    <location>
        <begin position="157"/>
        <end position="199"/>
    </location>
</feature>
<feature type="region of interest" description="Disordered" evidence="2">
    <location>
        <begin position="218"/>
        <end position="240"/>
    </location>
</feature>
<feature type="region of interest" description="Disordered" evidence="2">
    <location>
        <begin position="277"/>
        <end position="301"/>
    </location>
</feature>
<feature type="region of interest" description="Disordered" evidence="2">
    <location>
        <begin position="313"/>
        <end position="338"/>
    </location>
</feature>
<feature type="region of interest" description="Disordered" evidence="2">
    <location>
        <begin position="350"/>
        <end position="461"/>
    </location>
</feature>
<feature type="region of interest" description="Disordered" evidence="2">
    <location>
        <begin position="505"/>
        <end position="527"/>
    </location>
</feature>
<feature type="region of interest" description="Disordered" evidence="2">
    <location>
        <begin position="719"/>
        <end position="747"/>
    </location>
</feature>
<feature type="region of interest" description="Disordered" evidence="2">
    <location>
        <begin position="1015"/>
        <end position="1064"/>
    </location>
</feature>
<feature type="region of interest" description="Disordered" evidence="2">
    <location>
        <begin position="1085"/>
        <end position="1186"/>
    </location>
</feature>
<feature type="region of interest" description="Disordered" evidence="2">
    <location>
        <begin position="1294"/>
        <end position="1342"/>
    </location>
</feature>
<feature type="region of interest" description="Disordered" evidence="2">
    <location>
        <begin position="1420"/>
        <end position="1451"/>
    </location>
</feature>
<feature type="region of interest" description="Disordered" evidence="2">
    <location>
        <begin position="1531"/>
        <end position="1612"/>
    </location>
</feature>
<feature type="region of interest" description="Disordered" evidence="2">
    <location>
        <begin position="1636"/>
        <end position="1655"/>
    </location>
</feature>
<feature type="region of interest" description="Disordered" evidence="2">
    <location>
        <begin position="1664"/>
        <end position="1718"/>
    </location>
</feature>
<feature type="region of interest" description="Disordered" evidence="2">
    <location>
        <begin position="1746"/>
        <end position="2033"/>
    </location>
</feature>
<feature type="compositionally biased region" description="Low complexity" evidence="2">
    <location>
        <begin position="1"/>
        <end position="16"/>
    </location>
</feature>
<feature type="compositionally biased region" description="Low complexity" evidence="2">
    <location>
        <begin position="157"/>
        <end position="173"/>
    </location>
</feature>
<feature type="compositionally biased region" description="Basic and acidic residues" evidence="2">
    <location>
        <begin position="223"/>
        <end position="240"/>
    </location>
</feature>
<feature type="compositionally biased region" description="Basic and acidic residues" evidence="2">
    <location>
        <begin position="313"/>
        <end position="326"/>
    </location>
</feature>
<feature type="compositionally biased region" description="Acidic residues" evidence="2">
    <location>
        <begin position="359"/>
        <end position="368"/>
    </location>
</feature>
<feature type="compositionally biased region" description="Low complexity" evidence="2">
    <location>
        <begin position="507"/>
        <end position="518"/>
    </location>
</feature>
<feature type="compositionally biased region" description="Gly residues" evidence="2">
    <location>
        <begin position="732"/>
        <end position="741"/>
    </location>
</feature>
<feature type="compositionally biased region" description="Low complexity" evidence="2">
    <location>
        <begin position="1031"/>
        <end position="1056"/>
    </location>
</feature>
<feature type="compositionally biased region" description="Acidic residues" evidence="2">
    <location>
        <begin position="1086"/>
        <end position="1097"/>
    </location>
</feature>
<feature type="compositionally biased region" description="Low complexity" evidence="2">
    <location>
        <begin position="1169"/>
        <end position="1181"/>
    </location>
</feature>
<feature type="compositionally biased region" description="Basic and acidic residues" evidence="2">
    <location>
        <begin position="1294"/>
        <end position="1303"/>
    </location>
</feature>
<feature type="compositionally biased region" description="Basic and acidic residues" evidence="2">
    <location>
        <begin position="1575"/>
        <end position="1591"/>
    </location>
</feature>
<feature type="compositionally biased region" description="Basic residues" evidence="2">
    <location>
        <begin position="1592"/>
        <end position="1602"/>
    </location>
</feature>
<feature type="compositionally biased region" description="Basic and acidic residues" evidence="2">
    <location>
        <begin position="1752"/>
        <end position="1765"/>
    </location>
</feature>
<feature type="compositionally biased region" description="Basic and acidic residues" evidence="2">
    <location>
        <begin position="1774"/>
        <end position="1795"/>
    </location>
</feature>
<feature type="compositionally biased region" description="Low complexity" evidence="2">
    <location>
        <begin position="1812"/>
        <end position="1843"/>
    </location>
</feature>
<feature type="compositionally biased region" description="Basic and acidic residues" evidence="2">
    <location>
        <begin position="1853"/>
        <end position="1869"/>
    </location>
</feature>
<feature type="compositionally biased region" description="Polar residues" evidence="2">
    <location>
        <begin position="1912"/>
        <end position="1921"/>
    </location>
</feature>
<feature type="compositionally biased region" description="Acidic residues" evidence="2">
    <location>
        <begin position="1927"/>
        <end position="1936"/>
    </location>
</feature>
<feature type="compositionally biased region" description="Low complexity" evidence="2">
    <location>
        <begin position="1937"/>
        <end position="1948"/>
    </location>
</feature>
<evidence type="ECO:0000250" key="1"/>
<evidence type="ECO:0000256" key="2">
    <source>
        <dbReference type="SAM" id="MobiDB-lite"/>
    </source>
</evidence>
<evidence type="ECO:0000305" key="3"/>
<sequence>MFWHQPRQQQLRQLQRAASGAGKHQRRSPPQTLGDDGDAAAQVPPSPTGALLAFLNQHASEEGGAAAASADGRVSVSPGFCSSILPEHSQDLFAFSDPTSASPQPVPMDASLSLFTPPVPDCGRDVGEEAEGAVAPSWRAPLPAPQWRPVHGPSWWLSSSSPSGSSRGSVTSPQYSGEETSDAASGAPTPPPQSSGSSYVYGQALADLMAMIQEIPAPPRSVPDCRRGEPVSEDGMADRCETDASCYTTDEPMEAEPSEPAGGVSWLGERADRMRADQSPRGLGAEPHVAEAGRPSSCVGEERADVVAIAAVEERKEAARRSPDAERNDDEEEYESLPCAQEFFTSQELAEINARAIAESDEAEDEDAGSPAARSQSSPFPSLGPAVFVLAPTSAKSSRGMRKKAIAVSRVVPDNDGEPDPCADGPGRDHVSSAQSAGANGALETETSVPRSATAPAGAVAACAQNTKRGYWRGAAAGHAEEETDSDDEDVLVVDVSACAEPFESFAQRQQPRQQQHAPRNKPARQRLRAGAIVAAASGNTLTVPSEPPHPSLAPLWKMLNLWLSEEWPAQGGGQDEGEAAVSASLLAPGSLPELPDMCPRVAVGIISHALAVDLSAPGGRITVDEALLPKPPAADYVYYGKTGYRPSMAAHPDVRRAAEEFSASDAAARVYVEEFGMAVEQHERLVAEFMLQPLSRVSHSYGGSRLNKTEKNLCKICLPPDGGDDRDGGGKSRGGRGGGSKDASRTAMATGVPHIVHAMRDGRAALALPHLMDVIRVCRRYDASQKTYLLSCLRLAFAPLVFPGASPPVGADDSPWPTSPIRECAAALREGFRALNDIRAEQDPPADERSRELALPLDRAITAARRVAATAAGLLNAVGASVVHDGRVGLPAFFLRGVTERREDLFSAARRCPRALYSWERSMRATTAALWGHLASRGPIAAPVADLEELSQALSAVLSVTSVPDGGDVRYAFAEADEGWRALAVMLGGGAVRTSSGESGDAETDAAYALLAPGKQSSAGVNHPRGRPGRATASSPRTPASRPPHGSAAAPPSGRDSPPGALNVPEAAEEELRLAAARDTTGDLLSDEAGTDDDGDAPVVISYVGPSSPPGVEDPSPDGLAALRPLPEGYVPRPGDVLRGDPGADENDDDARAPCRVGDASPPRQLPSSSSFASSSLASAVPGDPYLPRSVAEPTLCRLAEHLQSDDGWTRAFANDPVGLAEFARRSTPGRRLGGQRRLDQLLSWTRRHSPRRRYSLIVLVSEKRPGDFRERAYAAAALAGRACVPGSACDPETWRDAEDHPSPSADAQSPLRSRPSRDCFPPRIAQPEASDDDDVGEGGTALLSAGDIGFAGAVESMLRRALSRQGQACAVVDARDDKDVLSAAAPRFPRGKPGLIYLRVAPPSEACVANLPSLGPSASPHRGVGGKHRDKRPCLAEGTPSAPSCRDAARATAPLSGDPVAHRLLMHRPAKPLVGEEACAALLGGKAGRRGQDVPLPFLTAATLRKVARVARELDPGWGHGDLGCESAVVFPPAAPPGPELADRHADRRRSTKGPQRPGGKRPRSSSSSSSASHDRSPSSSSRRRDGRPSSRRRPSRRMSARPPSRPPAAVILRASWRYAEEVAREMLDAAASRFDEADGEDPLPPAACGGKPIAPETLVALCEQRGRGPTSLPRAPTPRSGEALAAPRRSGAKDPRQGQYCPSARRSEAPHSPSPRDVALRLLERQQELNRQLLLELRRGSCEISPSPRRRDAEGRRFGCRQDDDDGYDYEGGRESPERVLGRRQSRRDSVPVRRRSGAANCGGRWMISAGRSSSSSSSSSSSSSSSPSSRPSRSATPSLSPSPSPPRRAPVDRSRSGRRRERDRPSANPFRWAPRQRSRADHSPDGTAPGDAPLNLEDGPGRGRPIWTPSSATTLPSRSGPEDSVDETETEDSAPPARLAPSPLETSRAEDSEDSEYPEYSNPRLGKSPPALKSREARRPSSKQPRRPSSGKNGHTDVSAASAFFLGRPAPGSCGRRPLGARVRGGTER</sequence>
<proteinExistence type="inferred from homology"/>
<comment type="function">
    <text evidence="1">This IE protein is a multifunctional protein capable of migrating to the nucleus, binding to DNA, trans-activating other viral genes, and autoregulating its own synthesis. It is required for the switch from immediate-early to early mode of gene expression (By similarity).</text>
</comment>
<comment type="subcellular location">
    <subcellularLocation>
        <location evidence="1">Host nucleus</location>
    </subcellularLocation>
</comment>
<comment type="PTM">
    <text evidence="1">A long stretch of serine residues may be a major site of phosphorylation.</text>
</comment>
<comment type="similarity">
    <text evidence="3">Belongs to the herpesviridae ICP4 family.</text>
</comment>
<reference key="1">
    <citation type="journal article" date="2006" name="J. Virol.">
        <title>Psittacid herpesvirus 1 and infectious laryngotracheitis virus: Comparative genome sequence analysis of two avian alphaherpesviruses.</title>
        <authorList>
            <person name="Thureen D.R."/>
            <person name="Keeler C.L. Jr."/>
        </authorList>
    </citation>
    <scope>NUCLEOTIDE SEQUENCE [LARGE SCALE GENOMIC DNA]</scope>
</reference>
<gene>
    <name type="primary">ICP4B</name>
    <name type="synonym">ICP4A</name>
</gene>
<organism>
    <name type="scientific">Psittacid herpesvirus 1 (isolate Amazon parrot/-/97-0001/1997)</name>
    <name type="common">PsHV-1</name>
    <name type="synonym">Pacheco's disease virus</name>
    <dbReference type="NCBI Taxonomy" id="670426"/>
    <lineage>
        <taxon>Viruses</taxon>
        <taxon>Duplodnaviria</taxon>
        <taxon>Heunggongvirae</taxon>
        <taxon>Peploviricota</taxon>
        <taxon>Herviviricetes</taxon>
        <taxon>Herpesvirales</taxon>
        <taxon>Orthoherpesviridae</taxon>
        <taxon>Alphaherpesvirinae</taxon>
        <taxon>Iltovirus</taxon>
        <taxon>Iltovirus psittacidalpha1</taxon>
        <taxon>Psittacid alphaherpesvirus 1</taxon>
    </lineage>
</organism>